<protein>
    <recommendedName>
        <fullName evidence="1">Molybdenum cofactor guanylyltransferase</fullName>
        <shortName evidence="1">MoCo guanylyltransferase</shortName>
        <ecNumber evidence="1">2.7.7.77</ecNumber>
    </recommendedName>
    <alternativeName>
        <fullName evidence="1">GTP:molybdopterin guanylyltransferase</fullName>
    </alternativeName>
    <alternativeName>
        <fullName evidence="1">Mo-MPT guanylyltransferase</fullName>
    </alternativeName>
    <alternativeName>
        <fullName evidence="1">Molybdopterin guanylyltransferase</fullName>
    </alternativeName>
    <alternativeName>
        <fullName evidence="1">Molybdopterin-guanine dinucleotide synthase</fullName>
        <shortName evidence="1">MGD synthase</shortName>
    </alternativeName>
</protein>
<gene>
    <name evidence="1" type="primary">mobA</name>
    <name type="ordered locus">RHOS4_23460</name>
    <name type="ORF">RSP_0738</name>
</gene>
<accession>Q3IZX0</accession>
<dbReference type="EC" id="2.7.7.77" evidence="1"/>
<dbReference type="EMBL" id="CP000143">
    <property type="protein sequence ID" value="ABA79914.1"/>
    <property type="molecule type" value="Genomic_DNA"/>
</dbReference>
<dbReference type="RefSeq" id="WP_011338451.1">
    <property type="nucleotide sequence ID" value="NC_007493.2"/>
</dbReference>
<dbReference type="RefSeq" id="YP_353815.1">
    <property type="nucleotide sequence ID" value="NC_007493.2"/>
</dbReference>
<dbReference type="SMR" id="Q3IZX0"/>
<dbReference type="STRING" id="272943.RSP_0738"/>
<dbReference type="EnsemblBacteria" id="ABA79914">
    <property type="protein sequence ID" value="ABA79914"/>
    <property type="gene ID" value="RSP_0738"/>
</dbReference>
<dbReference type="GeneID" id="3718102"/>
<dbReference type="KEGG" id="rsp:RSP_0738"/>
<dbReference type="PATRIC" id="fig|272943.9.peg.2691"/>
<dbReference type="eggNOG" id="COG0746">
    <property type="taxonomic scope" value="Bacteria"/>
</dbReference>
<dbReference type="OrthoDB" id="9788394at2"/>
<dbReference type="PhylomeDB" id="Q3IZX0"/>
<dbReference type="Proteomes" id="UP000002703">
    <property type="component" value="Chromosome 1"/>
</dbReference>
<dbReference type="GO" id="GO:0005737">
    <property type="term" value="C:cytoplasm"/>
    <property type="evidence" value="ECO:0007669"/>
    <property type="project" value="UniProtKB-SubCell"/>
</dbReference>
<dbReference type="GO" id="GO:0005525">
    <property type="term" value="F:GTP binding"/>
    <property type="evidence" value="ECO:0007669"/>
    <property type="project" value="UniProtKB-UniRule"/>
</dbReference>
<dbReference type="GO" id="GO:0046872">
    <property type="term" value="F:metal ion binding"/>
    <property type="evidence" value="ECO:0007669"/>
    <property type="project" value="UniProtKB-KW"/>
</dbReference>
<dbReference type="GO" id="GO:0061603">
    <property type="term" value="F:molybdenum cofactor guanylyltransferase activity"/>
    <property type="evidence" value="ECO:0007669"/>
    <property type="project" value="UniProtKB-EC"/>
</dbReference>
<dbReference type="GO" id="GO:1902758">
    <property type="term" value="P:bis(molybdopterin guanine dinucleotide)molybdenum biosynthetic process"/>
    <property type="evidence" value="ECO:0007669"/>
    <property type="project" value="TreeGrafter"/>
</dbReference>
<dbReference type="CDD" id="cd02503">
    <property type="entry name" value="MobA"/>
    <property type="match status" value="1"/>
</dbReference>
<dbReference type="Gene3D" id="3.90.550.10">
    <property type="entry name" value="Spore Coat Polysaccharide Biosynthesis Protein SpsA, Chain A"/>
    <property type="match status" value="1"/>
</dbReference>
<dbReference type="HAMAP" id="MF_00316">
    <property type="entry name" value="MobA"/>
    <property type="match status" value="1"/>
</dbReference>
<dbReference type="InterPro" id="IPR025877">
    <property type="entry name" value="MobA-like_NTP_Trfase"/>
</dbReference>
<dbReference type="InterPro" id="IPR013482">
    <property type="entry name" value="Molybde_CF_guanTrfase"/>
</dbReference>
<dbReference type="InterPro" id="IPR029044">
    <property type="entry name" value="Nucleotide-diphossugar_trans"/>
</dbReference>
<dbReference type="NCBIfam" id="TIGR02665">
    <property type="entry name" value="molyb_mobA"/>
    <property type="match status" value="1"/>
</dbReference>
<dbReference type="PANTHER" id="PTHR19136">
    <property type="entry name" value="MOLYBDENUM COFACTOR GUANYLYLTRANSFERASE"/>
    <property type="match status" value="1"/>
</dbReference>
<dbReference type="PANTHER" id="PTHR19136:SF81">
    <property type="entry name" value="MOLYBDENUM COFACTOR GUANYLYLTRANSFERASE"/>
    <property type="match status" value="1"/>
</dbReference>
<dbReference type="Pfam" id="PF12804">
    <property type="entry name" value="NTP_transf_3"/>
    <property type="match status" value="1"/>
</dbReference>
<dbReference type="SUPFAM" id="SSF53448">
    <property type="entry name" value="Nucleotide-diphospho-sugar transferases"/>
    <property type="match status" value="1"/>
</dbReference>
<feature type="chain" id="PRO_1000019144" description="Molybdenum cofactor guanylyltransferase">
    <location>
        <begin position="1"/>
        <end position="193"/>
    </location>
</feature>
<feature type="binding site" evidence="1">
    <location>
        <begin position="8"/>
        <end position="10"/>
    </location>
    <ligand>
        <name>GTP</name>
        <dbReference type="ChEBI" id="CHEBI:37565"/>
    </ligand>
</feature>
<feature type="binding site" evidence="1">
    <location>
        <position position="21"/>
    </location>
    <ligand>
        <name>GTP</name>
        <dbReference type="ChEBI" id="CHEBI:37565"/>
    </ligand>
</feature>
<feature type="binding site" evidence="1">
    <location>
        <position position="67"/>
    </location>
    <ligand>
        <name>GTP</name>
        <dbReference type="ChEBI" id="CHEBI:37565"/>
    </ligand>
</feature>
<feature type="binding site" evidence="1">
    <location>
        <position position="98"/>
    </location>
    <ligand>
        <name>GTP</name>
        <dbReference type="ChEBI" id="CHEBI:37565"/>
    </ligand>
</feature>
<feature type="binding site" evidence="1">
    <location>
        <position position="98"/>
    </location>
    <ligand>
        <name>Mg(2+)</name>
        <dbReference type="ChEBI" id="CHEBI:18420"/>
    </ligand>
</feature>
<organism>
    <name type="scientific">Cereibacter sphaeroides (strain ATCC 17023 / DSM 158 / JCM 6121 / CCUG 31486 / LMG 2827 / NBRC 12203 / NCIMB 8253 / ATH 2.4.1.)</name>
    <name type="common">Rhodobacter sphaeroides</name>
    <dbReference type="NCBI Taxonomy" id="272943"/>
    <lineage>
        <taxon>Bacteria</taxon>
        <taxon>Pseudomonadati</taxon>
        <taxon>Pseudomonadota</taxon>
        <taxon>Alphaproteobacteria</taxon>
        <taxon>Rhodobacterales</taxon>
        <taxon>Paracoccaceae</taxon>
        <taxon>Cereibacter</taxon>
    </lineage>
</organism>
<evidence type="ECO:0000255" key="1">
    <source>
        <dbReference type="HAMAP-Rule" id="MF_00316"/>
    </source>
</evidence>
<proteinExistence type="inferred from homology"/>
<reference key="1">
    <citation type="submission" date="2005-09" db="EMBL/GenBank/DDBJ databases">
        <title>Complete sequence of chromosome 1 of Rhodobacter sphaeroides 2.4.1.</title>
        <authorList>
            <person name="Copeland A."/>
            <person name="Lucas S."/>
            <person name="Lapidus A."/>
            <person name="Barry K."/>
            <person name="Detter J.C."/>
            <person name="Glavina T."/>
            <person name="Hammon N."/>
            <person name="Israni S."/>
            <person name="Pitluck S."/>
            <person name="Richardson P."/>
            <person name="Mackenzie C."/>
            <person name="Choudhary M."/>
            <person name="Larimer F."/>
            <person name="Hauser L.J."/>
            <person name="Land M."/>
            <person name="Donohue T.J."/>
            <person name="Kaplan S."/>
        </authorList>
    </citation>
    <scope>NUCLEOTIDE SEQUENCE [LARGE SCALE GENOMIC DNA]</scope>
    <source>
        <strain>ATCC 17023 / DSM 158 / JCM 6121 / CCUG 31486 / LMG 2827 / NBRC 12203 / NCIMB 8253 / ATH 2.4.1.</strain>
    </source>
</reference>
<sequence>MRLFGLILAGGEGRRMGGTDKASLTLGGRLLVTWVAERLGPQVEELAISANGDPARFAGLGLPVLRDEHPQGPLSGVLAGLRWAAAAGADALVTAPVDTPFVPGDLAPRLWLAGEGTCAVAEAGGRVHPACGLWPVAVAEDLAAWLAAGEARVMGFAARHGAARAGFPDENAFLNLNAPEDLARAESLLRKDA</sequence>
<comment type="function">
    <text evidence="1">Transfers a GMP moiety from GTP to Mo-molybdopterin (Mo-MPT) cofactor (Moco or molybdenum cofactor) to form Mo-molybdopterin guanine dinucleotide (Mo-MGD) cofactor.</text>
</comment>
<comment type="catalytic activity">
    <reaction evidence="1">
        <text>Mo-molybdopterin + GTP + H(+) = Mo-molybdopterin guanine dinucleotide + diphosphate</text>
        <dbReference type="Rhea" id="RHEA:34243"/>
        <dbReference type="ChEBI" id="CHEBI:15378"/>
        <dbReference type="ChEBI" id="CHEBI:33019"/>
        <dbReference type="ChEBI" id="CHEBI:37565"/>
        <dbReference type="ChEBI" id="CHEBI:71302"/>
        <dbReference type="ChEBI" id="CHEBI:71310"/>
        <dbReference type="EC" id="2.7.7.77"/>
    </reaction>
</comment>
<comment type="cofactor">
    <cofactor evidence="1">
        <name>Mg(2+)</name>
        <dbReference type="ChEBI" id="CHEBI:18420"/>
    </cofactor>
</comment>
<comment type="subunit">
    <text evidence="1">Monomer.</text>
</comment>
<comment type="subcellular location">
    <subcellularLocation>
        <location evidence="1">Cytoplasm</location>
    </subcellularLocation>
</comment>
<comment type="domain">
    <text evidence="1">The N-terminal domain determines nucleotide recognition and specific binding, while the C-terminal domain determines the specific binding to the target protein.</text>
</comment>
<comment type="similarity">
    <text evidence="1">Belongs to the MobA family.</text>
</comment>
<keyword id="KW-0963">Cytoplasm</keyword>
<keyword id="KW-0342">GTP-binding</keyword>
<keyword id="KW-0460">Magnesium</keyword>
<keyword id="KW-0479">Metal-binding</keyword>
<keyword id="KW-0501">Molybdenum cofactor biosynthesis</keyword>
<keyword id="KW-0547">Nucleotide-binding</keyword>
<keyword id="KW-1185">Reference proteome</keyword>
<keyword id="KW-0808">Transferase</keyword>
<name>MOBA_CERS4</name>